<accession>Q3MAS0</accession>
<dbReference type="EC" id="7.1.2.2" evidence="1"/>
<dbReference type="EMBL" id="CP000117">
    <property type="protein sequence ID" value="ABA21916.1"/>
    <property type="molecule type" value="Genomic_DNA"/>
</dbReference>
<dbReference type="SMR" id="Q3MAS0"/>
<dbReference type="STRING" id="240292.Ava_2298"/>
<dbReference type="KEGG" id="ava:Ava_2298"/>
<dbReference type="eggNOG" id="COG0055">
    <property type="taxonomic scope" value="Bacteria"/>
</dbReference>
<dbReference type="HOGENOM" id="CLU_022398_0_2_3"/>
<dbReference type="Proteomes" id="UP000002533">
    <property type="component" value="Chromosome"/>
</dbReference>
<dbReference type="GO" id="GO:0031676">
    <property type="term" value="C:plasma membrane-derived thylakoid membrane"/>
    <property type="evidence" value="ECO:0007669"/>
    <property type="project" value="UniProtKB-SubCell"/>
</dbReference>
<dbReference type="GO" id="GO:0045259">
    <property type="term" value="C:proton-transporting ATP synthase complex"/>
    <property type="evidence" value="ECO:0007669"/>
    <property type="project" value="UniProtKB-KW"/>
</dbReference>
<dbReference type="GO" id="GO:0005524">
    <property type="term" value="F:ATP binding"/>
    <property type="evidence" value="ECO:0007669"/>
    <property type="project" value="UniProtKB-UniRule"/>
</dbReference>
<dbReference type="GO" id="GO:0016887">
    <property type="term" value="F:ATP hydrolysis activity"/>
    <property type="evidence" value="ECO:0007669"/>
    <property type="project" value="InterPro"/>
</dbReference>
<dbReference type="GO" id="GO:0046933">
    <property type="term" value="F:proton-transporting ATP synthase activity, rotational mechanism"/>
    <property type="evidence" value="ECO:0007669"/>
    <property type="project" value="UniProtKB-UniRule"/>
</dbReference>
<dbReference type="CDD" id="cd18110">
    <property type="entry name" value="ATP-synt_F1_beta_C"/>
    <property type="match status" value="1"/>
</dbReference>
<dbReference type="CDD" id="cd18115">
    <property type="entry name" value="ATP-synt_F1_beta_N"/>
    <property type="match status" value="1"/>
</dbReference>
<dbReference type="CDD" id="cd01133">
    <property type="entry name" value="F1-ATPase_beta_CD"/>
    <property type="match status" value="1"/>
</dbReference>
<dbReference type="FunFam" id="1.10.1140.10:FF:000001">
    <property type="entry name" value="ATP synthase subunit beta"/>
    <property type="match status" value="1"/>
</dbReference>
<dbReference type="FunFam" id="3.40.50.300:FF:000004">
    <property type="entry name" value="ATP synthase subunit beta"/>
    <property type="match status" value="1"/>
</dbReference>
<dbReference type="FunFam" id="2.40.10.170:FF:000002">
    <property type="entry name" value="ATP synthase subunit beta, chloroplastic"/>
    <property type="match status" value="1"/>
</dbReference>
<dbReference type="Gene3D" id="2.40.10.170">
    <property type="match status" value="1"/>
</dbReference>
<dbReference type="Gene3D" id="1.10.1140.10">
    <property type="entry name" value="Bovine Mitochondrial F1-atpase, Atp Synthase Beta Chain, Chain D, domain 3"/>
    <property type="match status" value="1"/>
</dbReference>
<dbReference type="Gene3D" id="3.40.50.300">
    <property type="entry name" value="P-loop containing nucleotide triphosphate hydrolases"/>
    <property type="match status" value="1"/>
</dbReference>
<dbReference type="HAMAP" id="MF_01347">
    <property type="entry name" value="ATP_synth_beta_bact"/>
    <property type="match status" value="1"/>
</dbReference>
<dbReference type="InterPro" id="IPR003593">
    <property type="entry name" value="AAA+_ATPase"/>
</dbReference>
<dbReference type="InterPro" id="IPR055190">
    <property type="entry name" value="ATP-synt_VA_C"/>
</dbReference>
<dbReference type="InterPro" id="IPR005722">
    <property type="entry name" value="ATP_synth_F1_bsu"/>
</dbReference>
<dbReference type="InterPro" id="IPR020003">
    <property type="entry name" value="ATPase_a/bsu_AS"/>
</dbReference>
<dbReference type="InterPro" id="IPR050053">
    <property type="entry name" value="ATPase_alpha/beta_chains"/>
</dbReference>
<dbReference type="InterPro" id="IPR004100">
    <property type="entry name" value="ATPase_F1/V1/A1_a/bsu_N"/>
</dbReference>
<dbReference type="InterPro" id="IPR036121">
    <property type="entry name" value="ATPase_F1/V1/A1_a/bsu_N_sf"/>
</dbReference>
<dbReference type="InterPro" id="IPR000194">
    <property type="entry name" value="ATPase_F1/V1/A1_a/bsu_nucl-bd"/>
</dbReference>
<dbReference type="InterPro" id="IPR024034">
    <property type="entry name" value="ATPase_F1/V1_b/a_C"/>
</dbReference>
<dbReference type="InterPro" id="IPR027417">
    <property type="entry name" value="P-loop_NTPase"/>
</dbReference>
<dbReference type="NCBIfam" id="TIGR01039">
    <property type="entry name" value="atpD"/>
    <property type="match status" value="1"/>
</dbReference>
<dbReference type="PANTHER" id="PTHR15184">
    <property type="entry name" value="ATP SYNTHASE"/>
    <property type="match status" value="1"/>
</dbReference>
<dbReference type="PANTHER" id="PTHR15184:SF71">
    <property type="entry name" value="ATP SYNTHASE SUBUNIT BETA, MITOCHONDRIAL"/>
    <property type="match status" value="1"/>
</dbReference>
<dbReference type="Pfam" id="PF00006">
    <property type="entry name" value="ATP-synt_ab"/>
    <property type="match status" value="1"/>
</dbReference>
<dbReference type="Pfam" id="PF02874">
    <property type="entry name" value="ATP-synt_ab_N"/>
    <property type="match status" value="1"/>
</dbReference>
<dbReference type="Pfam" id="PF22919">
    <property type="entry name" value="ATP-synt_VA_C"/>
    <property type="match status" value="1"/>
</dbReference>
<dbReference type="PIRSF" id="PIRSF039072">
    <property type="entry name" value="ATPase_subunit_beta"/>
    <property type="match status" value="1"/>
</dbReference>
<dbReference type="SMART" id="SM00382">
    <property type="entry name" value="AAA"/>
    <property type="match status" value="1"/>
</dbReference>
<dbReference type="SUPFAM" id="SSF47917">
    <property type="entry name" value="C-terminal domain of alpha and beta subunits of F1 ATP synthase"/>
    <property type="match status" value="1"/>
</dbReference>
<dbReference type="SUPFAM" id="SSF50615">
    <property type="entry name" value="N-terminal domain of alpha and beta subunits of F1 ATP synthase"/>
    <property type="match status" value="1"/>
</dbReference>
<dbReference type="SUPFAM" id="SSF52540">
    <property type="entry name" value="P-loop containing nucleoside triphosphate hydrolases"/>
    <property type="match status" value="1"/>
</dbReference>
<dbReference type="PROSITE" id="PS00152">
    <property type="entry name" value="ATPASE_ALPHA_BETA"/>
    <property type="match status" value="1"/>
</dbReference>
<keyword id="KW-0066">ATP synthesis</keyword>
<keyword id="KW-0067">ATP-binding</keyword>
<keyword id="KW-0139">CF(1)</keyword>
<keyword id="KW-0375">Hydrogen ion transport</keyword>
<keyword id="KW-0406">Ion transport</keyword>
<keyword id="KW-0472">Membrane</keyword>
<keyword id="KW-0547">Nucleotide-binding</keyword>
<keyword id="KW-0793">Thylakoid</keyword>
<keyword id="KW-1278">Translocase</keyword>
<keyword id="KW-0813">Transport</keyword>
<sequence>MVTTAEKTNIGYITQIIGPVVDVKFPSGKLPQIYNALTIKGTNEAGQELNLTVEVQQLLGDNQIRAVAMSSTDGLVRGLEVVDTGAPISVPVGKATLGRIFNVLGEPVDNRGPVNNQETLPIHRPAPKLTELETKPSVFETGIKVVDLLTPYRRGGKIGLFGGAGVGKTVIMMELINNIATQHGGVSVFAGVGERTREGNDLYNEMIESGVINKDNLNESKIALVYGQMNEPPGARMRVGLSGLTMAEYFRDVNKQDVLLFIDNIFRFVQAGSEVSALLGRMPSAVGYQPTLGTDVGQLQERITSTTEGSITSIQAVYVPADDLTDPAPATTFAHLDGTTVLSRGLAAKGIYPAVDPLGSTSTMLQPNIVGDEHYNTARAVQSTLQRYKELQDIIAILGLDELSEEDRLIVARARKVERFLSQPFFVAEVFTGSPGKYVKLEDTIKGFQKILSGELDDLPEQAFYLVGDINEAIAKAEKLKG</sequence>
<evidence type="ECO:0000255" key="1">
    <source>
        <dbReference type="HAMAP-Rule" id="MF_01347"/>
    </source>
</evidence>
<protein>
    <recommendedName>
        <fullName evidence="1">ATP synthase subunit beta</fullName>
        <ecNumber evidence="1">7.1.2.2</ecNumber>
    </recommendedName>
    <alternativeName>
        <fullName evidence="1">ATP synthase F1 sector subunit beta</fullName>
    </alternativeName>
    <alternativeName>
        <fullName evidence="1">F-ATPase subunit beta</fullName>
    </alternativeName>
</protein>
<gene>
    <name evidence="1" type="primary">atpD</name>
    <name evidence="1" type="synonym">atpB</name>
    <name type="ordered locus">Ava_2298</name>
</gene>
<reference key="1">
    <citation type="journal article" date="2014" name="Stand. Genomic Sci.">
        <title>Complete genome sequence of Anabaena variabilis ATCC 29413.</title>
        <authorList>
            <person name="Thiel T."/>
            <person name="Pratte B.S."/>
            <person name="Zhong J."/>
            <person name="Goodwin L."/>
            <person name="Copeland A."/>
            <person name="Lucas S."/>
            <person name="Han C."/>
            <person name="Pitluck S."/>
            <person name="Land M.L."/>
            <person name="Kyrpides N.C."/>
            <person name="Woyke T."/>
        </authorList>
    </citation>
    <scope>NUCLEOTIDE SEQUENCE [LARGE SCALE GENOMIC DNA]</scope>
    <source>
        <strain>ATCC 29413 / PCC 7937</strain>
    </source>
</reference>
<name>ATPB_TRIV2</name>
<organism>
    <name type="scientific">Trichormus variabilis (strain ATCC 29413 / PCC 7937)</name>
    <name type="common">Anabaena variabilis</name>
    <dbReference type="NCBI Taxonomy" id="240292"/>
    <lineage>
        <taxon>Bacteria</taxon>
        <taxon>Bacillati</taxon>
        <taxon>Cyanobacteriota</taxon>
        <taxon>Cyanophyceae</taxon>
        <taxon>Nostocales</taxon>
        <taxon>Nostocaceae</taxon>
        <taxon>Trichormus</taxon>
    </lineage>
</organism>
<comment type="function">
    <text evidence="1">Produces ATP from ADP in the presence of a proton gradient across the membrane. The catalytic sites are hosted primarily by the beta subunits.</text>
</comment>
<comment type="catalytic activity">
    <reaction evidence="1">
        <text>ATP + H2O + 4 H(+)(in) = ADP + phosphate + 5 H(+)(out)</text>
        <dbReference type="Rhea" id="RHEA:57720"/>
        <dbReference type="ChEBI" id="CHEBI:15377"/>
        <dbReference type="ChEBI" id="CHEBI:15378"/>
        <dbReference type="ChEBI" id="CHEBI:30616"/>
        <dbReference type="ChEBI" id="CHEBI:43474"/>
        <dbReference type="ChEBI" id="CHEBI:456216"/>
        <dbReference type="EC" id="7.1.2.2"/>
    </reaction>
</comment>
<comment type="subunit">
    <text evidence="1">F-type ATPases have 2 components, CF(1) - the catalytic core - and CF(0) - the membrane proton channel. CF(1) has five subunits: alpha(3), beta(3), gamma(1), delta(1), epsilon(1). CF(0) has four main subunits: a(1), b(1), b'(1) and c(9-12).</text>
</comment>
<comment type="subcellular location">
    <subcellularLocation>
        <location evidence="1">Cellular thylakoid membrane</location>
        <topology evidence="1">Peripheral membrane protein</topology>
    </subcellularLocation>
</comment>
<comment type="similarity">
    <text evidence="1">Belongs to the ATPase alpha/beta chains family.</text>
</comment>
<feature type="chain" id="PRO_0000254200" description="ATP synthase subunit beta">
    <location>
        <begin position="1"/>
        <end position="482"/>
    </location>
</feature>
<feature type="binding site" evidence="1">
    <location>
        <begin position="162"/>
        <end position="169"/>
    </location>
    <ligand>
        <name>ATP</name>
        <dbReference type="ChEBI" id="CHEBI:30616"/>
    </ligand>
</feature>
<proteinExistence type="inferred from homology"/>